<comment type="subcellular location">
    <subcellularLocation>
        <location evidence="1">Cell membrane</location>
        <topology evidence="1">Multi-pass membrane protein</topology>
    </subcellularLocation>
</comment>
<comment type="similarity">
    <text evidence="1">Belongs to the UPF0295 family.</text>
</comment>
<reference key="1">
    <citation type="journal article" date="2003" name="Nature">
        <title>The genome sequence of Bacillus anthracis Ames and comparison to closely related bacteria.</title>
        <authorList>
            <person name="Read T.D."/>
            <person name="Peterson S.N."/>
            <person name="Tourasse N.J."/>
            <person name="Baillie L.W."/>
            <person name="Paulsen I.T."/>
            <person name="Nelson K.E."/>
            <person name="Tettelin H."/>
            <person name="Fouts D.E."/>
            <person name="Eisen J.A."/>
            <person name="Gill S.R."/>
            <person name="Holtzapple E.K."/>
            <person name="Okstad O.A."/>
            <person name="Helgason E."/>
            <person name="Rilstone J."/>
            <person name="Wu M."/>
            <person name="Kolonay J.F."/>
            <person name="Beanan M.J."/>
            <person name="Dodson R.J."/>
            <person name="Brinkac L.M."/>
            <person name="Gwinn M.L."/>
            <person name="DeBoy R.T."/>
            <person name="Madpu R."/>
            <person name="Daugherty S.C."/>
            <person name="Durkin A.S."/>
            <person name="Haft D.H."/>
            <person name="Nelson W.C."/>
            <person name="Peterson J.D."/>
            <person name="Pop M."/>
            <person name="Khouri H.M."/>
            <person name="Radune D."/>
            <person name="Benton J.L."/>
            <person name="Mahamoud Y."/>
            <person name="Jiang L."/>
            <person name="Hance I.R."/>
            <person name="Weidman J.F."/>
            <person name="Berry K.J."/>
            <person name="Plaut R.D."/>
            <person name="Wolf A.M."/>
            <person name="Watkins K.L."/>
            <person name="Nierman W.C."/>
            <person name="Hazen A."/>
            <person name="Cline R.T."/>
            <person name="Redmond C."/>
            <person name="Thwaite J.E."/>
            <person name="White O."/>
            <person name="Salzberg S.L."/>
            <person name="Thomason B."/>
            <person name="Friedlander A.M."/>
            <person name="Koehler T.M."/>
            <person name="Hanna P.C."/>
            <person name="Kolstoe A.-B."/>
            <person name="Fraser C.M."/>
        </authorList>
    </citation>
    <scope>NUCLEOTIDE SEQUENCE [LARGE SCALE GENOMIC DNA]</scope>
    <source>
        <strain>Ames / isolate Porton</strain>
    </source>
</reference>
<reference key="2">
    <citation type="journal article" date="2009" name="J. Bacteriol.">
        <title>The complete genome sequence of Bacillus anthracis Ames 'Ancestor'.</title>
        <authorList>
            <person name="Ravel J."/>
            <person name="Jiang L."/>
            <person name="Stanley S.T."/>
            <person name="Wilson M.R."/>
            <person name="Decker R.S."/>
            <person name="Read T.D."/>
            <person name="Worsham P."/>
            <person name="Keim P.S."/>
            <person name="Salzberg S.L."/>
            <person name="Fraser-Liggett C.M."/>
            <person name="Rasko D.A."/>
        </authorList>
    </citation>
    <scope>NUCLEOTIDE SEQUENCE [LARGE SCALE GENOMIC DNA]</scope>
    <source>
        <strain>Ames ancestor</strain>
    </source>
</reference>
<reference key="3">
    <citation type="submission" date="2004-01" db="EMBL/GenBank/DDBJ databases">
        <title>Complete genome sequence of Bacillus anthracis Sterne.</title>
        <authorList>
            <person name="Brettin T.S."/>
            <person name="Bruce D."/>
            <person name="Challacombe J.F."/>
            <person name="Gilna P."/>
            <person name="Han C."/>
            <person name="Hill K."/>
            <person name="Hitchcock P."/>
            <person name="Jackson P."/>
            <person name="Keim P."/>
            <person name="Longmire J."/>
            <person name="Lucas S."/>
            <person name="Okinaka R."/>
            <person name="Richardson P."/>
            <person name="Rubin E."/>
            <person name="Tice H."/>
        </authorList>
    </citation>
    <scope>NUCLEOTIDE SEQUENCE [LARGE SCALE GENOMIC DNA]</scope>
    <source>
        <strain>Sterne</strain>
    </source>
</reference>
<name>Y538_BACAN</name>
<proteinExistence type="inferred from homology"/>
<feature type="chain" id="PRO_0000053847" description="UPF0295 protein BA_0538/GBAA_0538/BAS0506">
    <location>
        <begin position="1"/>
        <end position="118"/>
    </location>
</feature>
<feature type="transmembrane region" description="Helical" evidence="1">
    <location>
        <begin position="12"/>
        <end position="32"/>
    </location>
</feature>
<feature type="transmembrane region" description="Helical" evidence="1">
    <location>
        <begin position="43"/>
        <end position="63"/>
    </location>
</feature>
<protein>
    <recommendedName>
        <fullName evidence="1">UPF0295 protein BA_0538/GBAA_0538/BAS0506</fullName>
    </recommendedName>
</protein>
<dbReference type="EMBL" id="AE016879">
    <property type="protein sequence ID" value="AAP24559.1"/>
    <property type="molecule type" value="Genomic_DNA"/>
</dbReference>
<dbReference type="EMBL" id="AE017334">
    <property type="protein sequence ID" value="AAT29633.1"/>
    <property type="molecule type" value="Genomic_DNA"/>
</dbReference>
<dbReference type="EMBL" id="AE017225">
    <property type="protein sequence ID" value="AAT52837.1"/>
    <property type="molecule type" value="Genomic_DNA"/>
</dbReference>
<dbReference type="RefSeq" id="NP_843073.1">
    <property type="nucleotide sequence ID" value="NC_003997.3"/>
</dbReference>
<dbReference type="RefSeq" id="WP_000025061.1">
    <property type="nucleotide sequence ID" value="NZ_WXXJ01000029.1"/>
</dbReference>
<dbReference type="RefSeq" id="YP_026786.1">
    <property type="nucleotide sequence ID" value="NC_005945.1"/>
</dbReference>
<dbReference type="STRING" id="261594.GBAA_0538"/>
<dbReference type="DNASU" id="1087802"/>
<dbReference type="GeneID" id="45020586"/>
<dbReference type="KEGG" id="ban:BA_0538"/>
<dbReference type="KEGG" id="bar:GBAA_0538"/>
<dbReference type="KEGG" id="bat:BAS0506"/>
<dbReference type="PATRIC" id="fig|198094.11.peg.537"/>
<dbReference type="eggNOG" id="ENOG50313Y4">
    <property type="taxonomic scope" value="Bacteria"/>
</dbReference>
<dbReference type="HOGENOM" id="CLU_143991_0_0_9"/>
<dbReference type="OMA" id="VYFWIGT"/>
<dbReference type="OrthoDB" id="1653848at2"/>
<dbReference type="Proteomes" id="UP000000427">
    <property type="component" value="Chromosome"/>
</dbReference>
<dbReference type="Proteomes" id="UP000000594">
    <property type="component" value="Chromosome"/>
</dbReference>
<dbReference type="GO" id="GO:0005886">
    <property type="term" value="C:plasma membrane"/>
    <property type="evidence" value="ECO:0007669"/>
    <property type="project" value="UniProtKB-SubCell"/>
</dbReference>
<dbReference type="HAMAP" id="MF_01502">
    <property type="entry name" value="UPF0295"/>
    <property type="match status" value="1"/>
</dbReference>
<dbReference type="InterPro" id="IPR020912">
    <property type="entry name" value="UPF0295"/>
</dbReference>
<dbReference type="NCBIfam" id="NF002796">
    <property type="entry name" value="PRK02935.1"/>
    <property type="match status" value="1"/>
</dbReference>
<dbReference type="Pfam" id="PF11023">
    <property type="entry name" value="DUF2614"/>
    <property type="match status" value="1"/>
</dbReference>
<accession>Q81YU3</accession>
<accession>Q6I3P4</accession>
<accession>Q6KXF7</accession>
<gene>
    <name type="ordered locus">BA_0538</name>
    <name type="ordered locus">GBAA_0538</name>
    <name type="ordered locus">BAS0506</name>
</gene>
<evidence type="ECO:0000255" key="1">
    <source>
        <dbReference type="HAMAP-Rule" id="MF_01502"/>
    </source>
</evidence>
<organism>
    <name type="scientific">Bacillus anthracis</name>
    <dbReference type="NCBI Taxonomy" id="1392"/>
    <lineage>
        <taxon>Bacteria</taxon>
        <taxon>Bacillati</taxon>
        <taxon>Bacillota</taxon>
        <taxon>Bacilli</taxon>
        <taxon>Bacillales</taxon>
        <taxon>Bacillaceae</taxon>
        <taxon>Bacillus</taxon>
        <taxon>Bacillus cereus group</taxon>
    </lineage>
</organism>
<keyword id="KW-1003">Cell membrane</keyword>
<keyword id="KW-0472">Membrane</keyword>
<keyword id="KW-1185">Reference proteome</keyword>
<keyword id="KW-0812">Transmembrane</keyword>
<keyword id="KW-1133">Transmembrane helix</keyword>
<sequence length="118" mass="13561">MSIKYSNKINKIRTFALSLVFIGLFIAYLGVFFRENIIIMTTFMMVGFLAVIASTVVYFWIGMLSTKTVQIICPSCDKPTKMLGRVDACMHCNQPLTMDRDLEGKEFDEKYNKKSYKS</sequence>